<keyword id="KW-0249">Electron transport</keyword>
<keyword id="KW-0472">Membrane</keyword>
<keyword id="KW-0496">Mitochondrion</keyword>
<keyword id="KW-0999">Mitochondrion inner membrane</keyword>
<keyword id="KW-0520">NAD</keyword>
<keyword id="KW-1185">Reference proteome</keyword>
<keyword id="KW-0679">Respiratory chain</keyword>
<keyword id="KW-1278">Translocase</keyword>
<keyword id="KW-0812">Transmembrane</keyword>
<keyword id="KW-1133">Transmembrane helix</keyword>
<keyword id="KW-0813">Transport</keyword>
<keyword id="KW-0830">Ubiquinone</keyword>
<evidence type="ECO:0000250" key="1">
    <source>
        <dbReference type="UniProtKB" id="P03886"/>
    </source>
</evidence>
<evidence type="ECO:0000250" key="2">
    <source>
        <dbReference type="UniProtKB" id="P03887"/>
    </source>
</evidence>
<evidence type="ECO:0000255" key="3"/>
<evidence type="ECO:0000305" key="4"/>
<gene>
    <name type="primary">MT-ND1</name>
    <name type="synonym">MTND1</name>
    <name type="synonym">NADH1</name>
    <name type="synonym">ND1</name>
</gene>
<reference key="1">
    <citation type="journal article" date="1995" name="Proc. Natl. Acad. Sci. U.S.A.">
        <title>Recent African origin of modern humans revealed by complete sequences of hominoid mitochondrial DNAs.</title>
        <authorList>
            <person name="Horai S."/>
            <person name="Hayasaka K."/>
            <person name="Kondo R."/>
            <person name="Tsugane K."/>
            <person name="Takahata N."/>
        </authorList>
    </citation>
    <scope>NUCLEOTIDE SEQUENCE [GENOMIC DNA]</scope>
</reference>
<accession>Q9T9W3</accession>
<sequence length="318" mass="35720">MPMTNLLLLIVPILIAMAFLMLTERKILGYMQLRKGPNIVGPYGLLQPFADAMKLFTKEPLKPSTSTITLYITAPTLALTIALLLWTPLPMPNPLVNLNLGLLFILATSSLAVYSILWSGWASNSNYALIGALRAVAQTISYEVTLAIILLSTLLMSGSFNLSTLVTTQEHLWLILPTWPLAMMWFISTLAETNRTPFDLTEGESELVSGFNIEYAAGPFALFFMAEYMNIIMMNTLTATIFLGATYNTHSPELYTTYFVTKALLLTSLFLWIRTAYPRFRYDQLMHLLWKNFLPLTLASLMWYISMPTTISSIPPQT</sequence>
<name>NU1M_PANTR</name>
<organism>
    <name type="scientific">Pan troglodytes</name>
    <name type="common">Chimpanzee</name>
    <dbReference type="NCBI Taxonomy" id="9598"/>
    <lineage>
        <taxon>Eukaryota</taxon>
        <taxon>Metazoa</taxon>
        <taxon>Chordata</taxon>
        <taxon>Craniata</taxon>
        <taxon>Vertebrata</taxon>
        <taxon>Euteleostomi</taxon>
        <taxon>Mammalia</taxon>
        <taxon>Eutheria</taxon>
        <taxon>Euarchontoglires</taxon>
        <taxon>Primates</taxon>
        <taxon>Haplorrhini</taxon>
        <taxon>Catarrhini</taxon>
        <taxon>Hominidae</taxon>
        <taxon>Pan</taxon>
    </lineage>
</organism>
<dbReference type="EC" id="7.1.1.2" evidence="1"/>
<dbReference type="EMBL" id="D38113">
    <property type="protein sequence ID" value="BAA85268.1"/>
    <property type="status" value="ALT_SEQ"/>
    <property type="molecule type" value="Genomic_DNA"/>
</dbReference>
<dbReference type="RefSeq" id="NP_008186.1">
    <property type="nucleotide sequence ID" value="NC_001643.1"/>
</dbReference>
<dbReference type="SMR" id="Q9T9W3"/>
<dbReference type="FunCoup" id="Q9T9W3">
    <property type="interactions" value="611"/>
</dbReference>
<dbReference type="STRING" id="9598.ENSPTRP00000061407"/>
<dbReference type="PaxDb" id="9598-ENSPTRP00000061407"/>
<dbReference type="Ensembl" id="ENSPTRT00000076390.1">
    <property type="protein sequence ID" value="ENSPTRP00000061407.1"/>
    <property type="gene ID" value="ENSPTRG00000042641.1"/>
</dbReference>
<dbReference type="GeneID" id="807867"/>
<dbReference type="KEGG" id="ptr:807867"/>
<dbReference type="CTD" id="4535"/>
<dbReference type="VGNC" id="VGNC:11717">
    <property type="gene designation" value="MT-ND1"/>
</dbReference>
<dbReference type="eggNOG" id="KOG4770">
    <property type="taxonomic scope" value="Eukaryota"/>
</dbReference>
<dbReference type="GeneTree" id="ENSGT00390000006621"/>
<dbReference type="HOGENOM" id="CLU_015134_0_1_1"/>
<dbReference type="InParanoid" id="Q9T9W3"/>
<dbReference type="OMA" id="WSGWASN"/>
<dbReference type="Proteomes" id="UP000002277">
    <property type="component" value="Mitochondrion"/>
</dbReference>
<dbReference type="Bgee" id="ENSPTRG00000042641">
    <property type="expression patterns" value="Expressed in Brodmann (1909) area 10 and 20 other cell types or tissues"/>
</dbReference>
<dbReference type="GO" id="GO:0005743">
    <property type="term" value="C:mitochondrial inner membrane"/>
    <property type="evidence" value="ECO:0000250"/>
    <property type="project" value="UniProtKB"/>
</dbReference>
<dbReference type="GO" id="GO:0045271">
    <property type="term" value="C:respiratory chain complex I"/>
    <property type="evidence" value="ECO:0000318"/>
    <property type="project" value="GO_Central"/>
</dbReference>
<dbReference type="GO" id="GO:0008137">
    <property type="term" value="F:NADH dehydrogenase (ubiquinone) activity"/>
    <property type="evidence" value="ECO:0000250"/>
    <property type="project" value="UniProtKB"/>
</dbReference>
<dbReference type="GO" id="GO:0009060">
    <property type="term" value="P:aerobic respiration"/>
    <property type="evidence" value="ECO:0000318"/>
    <property type="project" value="GO_Central"/>
</dbReference>
<dbReference type="GO" id="GO:0006120">
    <property type="term" value="P:mitochondrial electron transport, NADH to ubiquinone"/>
    <property type="evidence" value="ECO:0000250"/>
    <property type="project" value="UniProtKB"/>
</dbReference>
<dbReference type="GO" id="GO:0032981">
    <property type="term" value="P:mitochondrial respiratory chain complex I assembly"/>
    <property type="evidence" value="ECO:0000250"/>
    <property type="project" value="UniProtKB"/>
</dbReference>
<dbReference type="HAMAP" id="MF_01350">
    <property type="entry name" value="NDH1_NuoH"/>
    <property type="match status" value="1"/>
</dbReference>
<dbReference type="InterPro" id="IPR001694">
    <property type="entry name" value="NADH_UbQ_OxRdtase_su1/FPO"/>
</dbReference>
<dbReference type="InterPro" id="IPR018086">
    <property type="entry name" value="NADH_UbQ_OxRdtase_su1_CS"/>
</dbReference>
<dbReference type="PANTHER" id="PTHR11432">
    <property type="entry name" value="NADH DEHYDROGENASE SUBUNIT 1"/>
    <property type="match status" value="1"/>
</dbReference>
<dbReference type="PANTHER" id="PTHR11432:SF3">
    <property type="entry name" value="NADH-UBIQUINONE OXIDOREDUCTASE CHAIN 1"/>
    <property type="match status" value="1"/>
</dbReference>
<dbReference type="Pfam" id="PF00146">
    <property type="entry name" value="NADHdh"/>
    <property type="match status" value="1"/>
</dbReference>
<dbReference type="PROSITE" id="PS00667">
    <property type="entry name" value="COMPLEX1_ND1_1"/>
    <property type="match status" value="1"/>
</dbReference>
<dbReference type="PROSITE" id="PS00668">
    <property type="entry name" value="COMPLEX1_ND1_2"/>
    <property type="match status" value="1"/>
</dbReference>
<feature type="chain" id="PRO_0000117444" description="NADH-ubiquinone oxidoreductase chain 1">
    <location>
        <begin position="1"/>
        <end position="318"/>
    </location>
</feature>
<feature type="transmembrane region" description="Helical" evidence="3">
    <location>
        <begin position="2"/>
        <end position="22"/>
    </location>
</feature>
<feature type="transmembrane region" description="Helical" evidence="3">
    <location>
        <begin position="68"/>
        <end position="88"/>
    </location>
</feature>
<feature type="transmembrane region" description="Helical" evidence="3">
    <location>
        <begin position="100"/>
        <end position="120"/>
    </location>
</feature>
<feature type="transmembrane region" description="Helical" evidence="3">
    <location>
        <begin position="146"/>
        <end position="166"/>
    </location>
</feature>
<feature type="transmembrane region" description="Helical" evidence="3">
    <location>
        <begin position="171"/>
        <end position="191"/>
    </location>
</feature>
<feature type="transmembrane region" description="Helical" evidence="3">
    <location>
        <begin position="213"/>
        <end position="233"/>
    </location>
</feature>
<feature type="transmembrane region" description="Helical" evidence="3">
    <location>
        <begin position="253"/>
        <end position="273"/>
    </location>
</feature>
<feature type="transmembrane region" description="Helical" evidence="3">
    <location>
        <begin position="285"/>
        <end position="305"/>
    </location>
</feature>
<protein>
    <recommendedName>
        <fullName>NADH-ubiquinone oxidoreductase chain 1</fullName>
        <ecNumber evidence="1">7.1.1.2</ecNumber>
    </recommendedName>
    <alternativeName>
        <fullName>NADH dehydrogenase subunit 1</fullName>
    </alternativeName>
</protein>
<geneLocation type="mitochondrion"/>
<proteinExistence type="inferred from homology"/>
<comment type="function">
    <text evidence="1">Core subunit of the mitochondrial membrane respiratory chain NADH dehydrogenase (Complex I) which catalyzes electron transfer from NADH through the respiratory chain, using ubiquinone as an electron acceptor. Essential for the catalytic activity and assembly of complex I.</text>
</comment>
<comment type="catalytic activity">
    <reaction evidence="1">
        <text>a ubiquinone + NADH + 5 H(+)(in) = a ubiquinol + NAD(+) + 4 H(+)(out)</text>
        <dbReference type="Rhea" id="RHEA:29091"/>
        <dbReference type="Rhea" id="RHEA-COMP:9565"/>
        <dbReference type="Rhea" id="RHEA-COMP:9566"/>
        <dbReference type="ChEBI" id="CHEBI:15378"/>
        <dbReference type="ChEBI" id="CHEBI:16389"/>
        <dbReference type="ChEBI" id="CHEBI:17976"/>
        <dbReference type="ChEBI" id="CHEBI:57540"/>
        <dbReference type="ChEBI" id="CHEBI:57945"/>
        <dbReference type="EC" id="7.1.1.2"/>
    </reaction>
</comment>
<comment type="subunit">
    <text evidence="2">Core subunit of respiratory chain NADH dehydrogenase (Complex I) which is composed of 45 different subunits.</text>
</comment>
<comment type="subcellular location">
    <subcellularLocation>
        <location evidence="2">Mitochondrion inner membrane</location>
        <topology evidence="3">Multi-pass membrane protein</topology>
    </subcellularLocation>
</comment>
<comment type="similarity">
    <text evidence="4">Belongs to the complex I subunit 1 family.</text>
</comment>